<reference key="1">
    <citation type="journal article" date="1990" name="Nature">
        <title>Porcine diacylglycerol kinase sequence has zinc finger and E-F hand motifs.</title>
        <authorList>
            <person name="Sakane F."/>
            <person name="Yamada K."/>
            <person name="Kanoh H."/>
            <person name="Yokoyama C."/>
            <person name="Tanabe T."/>
        </authorList>
    </citation>
    <scope>NUCLEOTIDE SEQUENCE [MRNA]</scope>
    <scope>PARTIAL PROTEIN SEQUENCE</scope>
    <source>
        <tissue>Lymphocyte</tissue>
    </source>
</reference>
<reference key="2">
    <citation type="journal article" date="1994" name="J. Biol. Chem.">
        <title>Molecular cloning of a diacylglycerol kinase isozyme predominantly expressed in human retina with a truncated and inactive enzyme expression in most other human cells.</title>
        <authorList>
            <person name="Kai M."/>
            <person name="Sakane F."/>
            <person name="Imai S."/>
            <person name="Wada I."/>
            <person name="Kanoh H."/>
        </authorList>
    </citation>
    <scope>FUNCTION</scope>
    <scope>CATALYTIC ACTIVITY</scope>
    <scope>PATHWAY</scope>
</reference>
<reference key="3">
    <citation type="journal article" date="1996" name="Biochem. J.">
        <title>The C-terminal part of diacylglycerol kinase alpha lacking zinc fingers serves as a catalytic domain.</title>
        <authorList>
            <person name="Sakane F."/>
            <person name="Kai M."/>
            <person name="Wada I."/>
            <person name="Imai S."/>
            <person name="Kanoh H."/>
        </authorList>
    </citation>
    <scope>FUNCTION</scope>
    <scope>CATALYTIC ACTIVITY</scope>
    <scope>BIOPHYSICOCHEMICAL PROPERTIES</scope>
    <scope>SUBCELLULAR LOCATION</scope>
    <scope>REGION</scope>
    <scope>MUTAGENESIS</scope>
</reference>
<reference key="4">
    <citation type="journal article" date="2013" name="Pharmacology">
        <title>Evaluations of the selectivities of the diacylglycerol kinase inhibitors R59022 and R59949 among diacylglycerol kinase isozymes using a new non-radioactive assay method.</title>
        <authorList>
            <person name="Sato M."/>
            <person name="Liu K."/>
            <person name="Sasaki S."/>
            <person name="Kunii N."/>
            <person name="Sakai H."/>
            <person name="Mizuno H."/>
            <person name="Saga H."/>
            <person name="Sakane F."/>
        </authorList>
    </citation>
    <scope>CATALYTIC ACTIVITY</scope>
    <scope>BIOPHYSICOCHEMICAL PROPERTIES</scope>
    <scope>ACTIVITY REGULATION</scope>
</reference>
<sequence length="734" mass="82606">MSKERGLISPSDFAQLQKYMEYSTKKVSDVLKLFEDGEMAEYLQGDAIGYEGFQQFLKIYLEVDSVPSHLSLALFQSFQTSYCSEETVKRDVVCLSDVSCYFSLLEGGRPEDKLEFTFKLYDTDRNGILDSSEVDRIIIQMMRMAEYLDWDVSELRPILQEMMKEIDYDGSGSVSLAEWLRAGATTVPLLVLLGLEMTLKDNGQHMWRPKRFPRPVYCNLCESSIGLGKQGLSCNLCKYTVHDQCAMKALPCEVSTYAKSRKDIGVQTHVWVRGGCESGRCDRCQKKIRIYHSLVGLHCVWCHLEIHDDCLPAMGHECDCGLLRDHILPPSSIYPSVLASGQERKVSKTSQKTTDDLNLSTSEALRIDPVSNTHPLLVFVNPKSGGKQGERVLWKFQYLLNPRQVFNLLKDGPEPGLRFFREVPDYRILVCGGDGTVGWILETIDKANLPFVPPVAVLPLGTGNDLARCLRWGGGYEGQNLGKILKDLEASKVVHMDRWSVEVIPQQTEEKSDPVPFQIINNYFSIGVDASIAHRFHIMREKYPEKFNSRMKNKLWYFEFATSESIFSTCKKLEESLTVEICGKPLDLSNLSLEGIAVLNIPSTHGGSNLWGDTKRPHGDIHGINQALGAMAKVITDPDILKTCVPDLSDKRLEVVGLEGAIEMGQIYTKLKNAGHRLAKCSEITFHTTKTLPMQIDGEPWMQTPCTIKITHRNQMPMLVGPPPRSSNFFGFLC</sequence>
<accession>P20192</accession>
<evidence type="ECO:0000250" key="1">
    <source>
        <dbReference type="UniProtKB" id="P23743"/>
    </source>
</evidence>
<evidence type="ECO:0000250" key="2">
    <source>
        <dbReference type="UniProtKB" id="P51556"/>
    </source>
</evidence>
<evidence type="ECO:0000255" key="3">
    <source>
        <dbReference type="PROSITE-ProRule" id="PRU00226"/>
    </source>
</evidence>
<evidence type="ECO:0000255" key="4">
    <source>
        <dbReference type="PROSITE-ProRule" id="PRU00448"/>
    </source>
</evidence>
<evidence type="ECO:0000255" key="5">
    <source>
        <dbReference type="PROSITE-ProRule" id="PRU00783"/>
    </source>
</evidence>
<evidence type="ECO:0000269" key="6">
    <source>
    </source>
</evidence>
<evidence type="ECO:0000269" key="7">
    <source>
    </source>
</evidence>
<evidence type="ECO:0000269" key="8">
    <source>
    </source>
</evidence>
<evidence type="ECO:0000305" key="9"/>
<evidence type="ECO:0000305" key="10">
    <source>
    </source>
</evidence>
<protein>
    <recommendedName>
        <fullName>Diacylglycerol kinase alpha</fullName>
        <shortName>DAG kinase alpha</shortName>
        <ecNumber evidence="6 7 8">2.7.1.107</ecNumber>
        <ecNumber evidence="2">2.7.1.93</ecNumber>
    </recommendedName>
    <alternativeName>
        <fullName>80 kDa diacylglycerol kinase</fullName>
    </alternativeName>
    <alternativeName>
        <fullName>Diglyceride kinase alpha</fullName>
        <shortName>DGK-alpha</shortName>
    </alternativeName>
</protein>
<proteinExistence type="evidence at protein level"/>
<name>DGKA_PIG</name>
<feature type="chain" id="PRO_0000218455" description="Diacylglycerol kinase alpha">
    <location>
        <begin position="1"/>
        <end position="734"/>
    </location>
</feature>
<feature type="domain" description="EF-hand 1" evidence="4">
    <location>
        <begin position="109"/>
        <end position="144"/>
    </location>
</feature>
<feature type="domain" description="EF-hand 2" evidence="4">
    <location>
        <begin position="154"/>
        <end position="189"/>
    </location>
</feature>
<feature type="domain" description="DAGKc" evidence="5">
    <location>
        <begin position="371"/>
        <end position="505"/>
    </location>
</feature>
<feature type="zinc finger region" description="Phorbol-ester/DAG-type 1" evidence="3">
    <location>
        <begin position="204"/>
        <end position="252"/>
    </location>
</feature>
<feature type="zinc finger region" description="Phorbol-ester/DAG-type 2" evidence="3">
    <location>
        <begin position="268"/>
        <end position="318"/>
    </location>
</feature>
<feature type="region of interest" description="Necessary and sufficient for the diacylglycerol kinase activity" evidence="8">
    <location>
        <begin position="358"/>
        <end position="505"/>
    </location>
</feature>
<feature type="binding site" evidence="4">
    <location>
        <position position="122"/>
    </location>
    <ligand>
        <name>Ca(2+)</name>
        <dbReference type="ChEBI" id="CHEBI:29108"/>
        <label>1</label>
    </ligand>
</feature>
<feature type="binding site" evidence="4">
    <location>
        <position position="124"/>
    </location>
    <ligand>
        <name>Ca(2+)</name>
        <dbReference type="ChEBI" id="CHEBI:29108"/>
        <label>1</label>
    </ligand>
</feature>
<feature type="binding site" evidence="4">
    <location>
        <position position="126"/>
    </location>
    <ligand>
        <name>Ca(2+)</name>
        <dbReference type="ChEBI" id="CHEBI:29108"/>
        <label>1</label>
    </ligand>
</feature>
<feature type="binding site" evidence="4">
    <location>
        <position position="133"/>
    </location>
    <ligand>
        <name>Ca(2+)</name>
        <dbReference type="ChEBI" id="CHEBI:29108"/>
        <label>1</label>
    </ligand>
</feature>
<feature type="binding site" evidence="4">
    <location>
        <position position="167"/>
    </location>
    <ligand>
        <name>Ca(2+)</name>
        <dbReference type="ChEBI" id="CHEBI:29108"/>
        <label>2</label>
    </ligand>
</feature>
<feature type="binding site" evidence="4">
    <location>
        <position position="169"/>
    </location>
    <ligand>
        <name>Ca(2+)</name>
        <dbReference type="ChEBI" id="CHEBI:29108"/>
        <label>2</label>
    </ligand>
</feature>
<feature type="binding site" evidence="4">
    <location>
        <position position="171"/>
    </location>
    <ligand>
        <name>Ca(2+)</name>
        <dbReference type="ChEBI" id="CHEBI:29108"/>
        <label>2</label>
    </ligand>
</feature>
<feature type="binding site" evidence="4">
    <location>
        <position position="173"/>
    </location>
    <ligand>
        <name>Ca(2+)</name>
        <dbReference type="ChEBI" id="CHEBI:29108"/>
        <label>2</label>
    </ligand>
</feature>
<feature type="binding site" evidence="4">
    <location>
        <position position="178"/>
    </location>
    <ligand>
        <name>Ca(2+)</name>
        <dbReference type="ChEBI" id="CHEBI:29108"/>
        <label>2</label>
    </ligand>
</feature>
<feature type="modified residue" description="N6-acetyllysine" evidence="1">
    <location>
        <position position="483"/>
    </location>
</feature>
<feature type="mutagenesis site" description="No significant effect on diacylglycerol kinase activity." evidence="8">
    <original>K</original>
    <variation>R</variation>
    <location>
        <position position="248"/>
    </location>
</feature>
<feature type="mutagenesis site" description="No significant effect on diacylglycerol kinase activity." evidence="8">
    <original>K</original>
    <variation>N</variation>
    <location>
        <position position="383"/>
    </location>
</feature>
<feature type="mutagenesis site" description="No significant effect on diacylglycerol kinase activity." evidence="8">
    <original>K</original>
    <variation>N</variation>
    <location>
        <position position="395"/>
    </location>
</feature>
<feature type="mutagenesis site" description="No significant effect on diacylglycerol kinase activity." evidence="8">
    <original>K</original>
    <variation>N</variation>
    <location>
        <position position="483"/>
    </location>
</feature>
<feature type="mutagenesis site" description="No significant effect on diacylglycerol kinase activity." evidence="8">
    <original>K</original>
    <variation>R</variation>
    <location>
        <position position="492"/>
    </location>
</feature>
<feature type="mutagenesis site" description="No significant effect on diacylglycerol kinase activity." evidence="8">
    <original>K</original>
    <variation>N</variation>
    <location>
        <position position="554"/>
    </location>
</feature>
<keyword id="KW-0007">Acetylation</keyword>
<keyword id="KW-0067">ATP-binding</keyword>
<keyword id="KW-0106">Calcium</keyword>
<keyword id="KW-0963">Cytoplasm</keyword>
<keyword id="KW-0903">Direct protein sequencing</keyword>
<keyword id="KW-0418">Kinase</keyword>
<keyword id="KW-0443">Lipid metabolism</keyword>
<keyword id="KW-0479">Metal-binding</keyword>
<keyword id="KW-0547">Nucleotide-binding</keyword>
<keyword id="KW-1185">Reference proteome</keyword>
<keyword id="KW-0677">Repeat</keyword>
<keyword id="KW-0808">Transferase</keyword>
<keyword id="KW-0862">Zinc</keyword>
<keyword id="KW-0863">Zinc-finger</keyword>
<organism>
    <name type="scientific">Sus scrofa</name>
    <name type="common">Pig</name>
    <dbReference type="NCBI Taxonomy" id="9823"/>
    <lineage>
        <taxon>Eukaryota</taxon>
        <taxon>Metazoa</taxon>
        <taxon>Chordata</taxon>
        <taxon>Craniata</taxon>
        <taxon>Vertebrata</taxon>
        <taxon>Euteleostomi</taxon>
        <taxon>Mammalia</taxon>
        <taxon>Eutheria</taxon>
        <taxon>Laurasiatheria</taxon>
        <taxon>Artiodactyla</taxon>
        <taxon>Suina</taxon>
        <taxon>Suidae</taxon>
        <taxon>Sus</taxon>
    </lineage>
</organism>
<comment type="function">
    <text evidence="1 7">Diacylglycerol kinase that converts diacylglycerol/DAG into phosphatidic acid/phosphatidate/PA and regulates the respective levels of these two bioactive lipids (PubMed:8034597). Thereby, acts as a central switch between the signaling pathways activated by these second messengers with different cellular targets and opposite effects in numerous biological processes (PubMed:8034597). Also plays an important role in the biosynthesis of complex lipids. Can also phosphorylate 1-alkyl-2-acylglycerol in vitro as efficiently as diacylglycerol provided it contains an arachidonoyl group. Also involved in the production of alkyl-lysophosphatidic acid, another bioactive lipid, through the phosphorylation of 1-alkyl-2-acetyl glycerol (By similarity).</text>
</comment>
<comment type="catalytic activity">
    <reaction evidence="7 8">
        <text>a 1,2-diacyl-sn-glycerol + ATP = a 1,2-diacyl-sn-glycero-3-phosphate + ADP + H(+)</text>
        <dbReference type="Rhea" id="RHEA:10272"/>
        <dbReference type="ChEBI" id="CHEBI:15378"/>
        <dbReference type="ChEBI" id="CHEBI:17815"/>
        <dbReference type="ChEBI" id="CHEBI:30616"/>
        <dbReference type="ChEBI" id="CHEBI:58608"/>
        <dbReference type="ChEBI" id="CHEBI:456216"/>
        <dbReference type="EC" id="2.7.1.107"/>
    </reaction>
    <physiologicalReaction direction="left-to-right" evidence="10">
        <dbReference type="Rhea" id="RHEA:10273"/>
    </physiologicalReaction>
</comment>
<comment type="catalytic activity">
    <reaction evidence="2">
        <text>a 1-O-alkyl-sn-glycerol + ATP = a 1-O-alkyl-sn-glycero-3-phosphate + ADP + H(+)</text>
        <dbReference type="Rhea" id="RHEA:16937"/>
        <dbReference type="ChEBI" id="CHEBI:15378"/>
        <dbReference type="ChEBI" id="CHEBI:15850"/>
        <dbReference type="ChEBI" id="CHEBI:30616"/>
        <dbReference type="ChEBI" id="CHEBI:58014"/>
        <dbReference type="ChEBI" id="CHEBI:456216"/>
        <dbReference type="EC" id="2.7.1.93"/>
    </reaction>
    <physiologicalReaction direction="left-to-right" evidence="2">
        <dbReference type="Rhea" id="RHEA:16938"/>
    </physiologicalReaction>
</comment>
<comment type="catalytic activity">
    <reaction evidence="1">
        <text>1-O-alkyl-2-acyl-sn-glycerol + ATP = 1-O-alkyl-2-acyl-sn-glycero-3-phosphate + ADP + H(+)</text>
        <dbReference type="Rhea" id="RHEA:44072"/>
        <dbReference type="ChEBI" id="CHEBI:15378"/>
        <dbReference type="ChEBI" id="CHEBI:30616"/>
        <dbReference type="ChEBI" id="CHEBI:52595"/>
        <dbReference type="ChEBI" id="CHEBI:73332"/>
        <dbReference type="ChEBI" id="CHEBI:456216"/>
    </reaction>
    <physiologicalReaction direction="left-to-right" evidence="1">
        <dbReference type="Rhea" id="RHEA:44073"/>
    </physiologicalReaction>
</comment>
<comment type="catalytic activity">
    <reaction evidence="1">
        <text>1,2-dihexadecanoyl-sn-glycerol + ATP = 1,2-dihexadecanoyl-sn-glycero-3-phosphate + ADP + H(+)</text>
        <dbReference type="Rhea" id="RHEA:63324"/>
        <dbReference type="ChEBI" id="CHEBI:15378"/>
        <dbReference type="ChEBI" id="CHEBI:30616"/>
        <dbReference type="ChEBI" id="CHEBI:72859"/>
        <dbReference type="ChEBI" id="CHEBI:82929"/>
        <dbReference type="ChEBI" id="CHEBI:456216"/>
    </reaction>
    <physiologicalReaction direction="left-to-right" evidence="1">
        <dbReference type="Rhea" id="RHEA:63325"/>
    </physiologicalReaction>
</comment>
<comment type="catalytic activity">
    <reaction evidence="1">
        <text>1-hexadecanoyl-2-(9Z-octadecenoyl)-sn-glycerol + ATP = 1-hexadecanoyl-2-(9Z-octadecenoyl)-sn-glycero-3-phosphate + ADP + H(+)</text>
        <dbReference type="Rhea" id="RHEA:43416"/>
        <dbReference type="ChEBI" id="CHEBI:15378"/>
        <dbReference type="ChEBI" id="CHEBI:30616"/>
        <dbReference type="ChEBI" id="CHEBI:64839"/>
        <dbReference type="ChEBI" id="CHEBI:75466"/>
        <dbReference type="ChEBI" id="CHEBI:456216"/>
    </reaction>
    <physiologicalReaction direction="left-to-right" evidence="1">
        <dbReference type="Rhea" id="RHEA:43417"/>
    </physiologicalReaction>
</comment>
<comment type="catalytic activity">
    <reaction evidence="1">
        <text>2-(9Z-octadecenoyl)-glycerol + ATP = 2-(9Z-octadecenoyl)-sn-glycero-3-phosphate + ADP + H(+)</text>
        <dbReference type="Rhea" id="RHEA:63328"/>
        <dbReference type="ChEBI" id="CHEBI:15378"/>
        <dbReference type="ChEBI" id="CHEBI:30616"/>
        <dbReference type="ChEBI" id="CHEBI:73990"/>
        <dbReference type="ChEBI" id="CHEBI:77593"/>
        <dbReference type="ChEBI" id="CHEBI:456216"/>
    </reaction>
    <physiologicalReaction direction="left-to-right" evidence="1">
        <dbReference type="Rhea" id="RHEA:63329"/>
    </physiologicalReaction>
</comment>
<comment type="catalytic activity">
    <reaction evidence="6 7">
        <text>1,2-di-(9Z-octadecenoyl)-sn-glycerol + ATP = 1,2-di-(9Z-octadecenoyl)-sn-glycero-3-phosphate + ADP + H(+)</text>
        <dbReference type="Rhea" id="RHEA:40327"/>
        <dbReference type="ChEBI" id="CHEBI:15378"/>
        <dbReference type="ChEBI" id="CHEBI:30616"/>
        <dbReference type="ChEBI" id="CHEBI:52333"/>
        <dbReference type="ChEBI" id="CHEBI:74546"/>
        <dbReference type="ChEBI" id="CHEBI:456216"/>
    </reaction>
    <physiologicalReaction direction="left-to-right" evidence="10">
        <dbReference type="Rhea" id="RHEA:40328"/>
    </physiologicalReaction>
</comment>
<comment type="catalytic activity">
    <reaction evidence="7">
        <text>1-octadecanoyl-2-(5Z,8Z,11Z,14Z-eicosatetraenoyl)-sn-glycerol + ATP = 1-octadecanoyl-2-(5Z,8Z,11Z,14Z-eicosatetraenoyl)-sn-glycero-3-phosphate + ADP + H(+)</text>
        <dbReference type="Rhea" id="RHEA:40323"/>
        <dbReference type="ChEBI" id="CHEBI:15378"/>
        <dbReference type="ChEBI" id="CHEBI:30616"/>
        <dbReference type="ChEBI" id="CHEBI:75728"/>
        <dbReference type="ChEBI" id="CHEBI:77091"/>
        <dbReference type="ChEBI" id="CHEBI:456216"/>
    </reaction>
    <physiologicalReaction direction="left-to-right" evidence="10">
        <dbReference type="Rhea" id="RHEA:40324"/>
    </physiologicalReaction>
</comment>
<comment type="catalytic activity">
    <reaction evidence="7">
        <text>1,2-didecanoyl-sn-glycerol + ATP = 1,2-didecanoyl-sn-glycero-3-phosphate + ADP + H(+)</text>
        <dbReference type="Rhea" id="RHEA:43428"/>
        <dbReference type="ChEBI" id="CHEBI:15378"/>
        <dbReference type="ChEBI" id="CHEBI:18155"/>
        <dbReference type="ChEBI" id="CHEBI:30616"/>
        <dbReference type="ChEBI" id="CHEBI:78227"/>
        <dbReference type="ChEBI" id="CHEBI:456216"/>
    </reaction>
    <physiologicalReaction direction="left-to-right" evidence="10">
        <dbReference type="Rhea" id="RHEA:43429"/>
    </physiologicalReaction>
</comment>
<comment type="catalytic activity">
    <reaction evidence="2">
        <text>1-O-hexadecyl-2-acetyl-sn-glycerol + ATP = 1-O-hexadecyl-2-acetyl-sn-glycero-3-phosphate + ADP + H(+)</text>
        <dbReference type="Rhea" id="RHEA:41676"/>
        <dbReference type="ChEBI" id="CHEBI:15378"/>
        <dbReference type="ChEBI" id="CHEBI:30616"/>
        <dbReference type="ChEBI" id="CHEBI:75936"/>
        <dbReference type="ChEBI" id="CHEBI:78385"/>
        <dbReference type="ChEBI" id="CHEBI:456216"/>
    </reaction>
    <physiologicalReaction direction="left-to-right" evidence="2">
        <dbReference type="Rhea" id="RHEA:41677"/>
    </physiologicalReaction>
</comment>
<comment type="catalytic activity">
    <reaction evidence="1">
        <text>1-O-hexadecyl-2-(5Z,8Z,11Z,14Z-eicosatetraenoyl)-sn-glycerol + ATP = 1-O-hexadecyl-2-(5Z,8Z,11Z,14Z-eicosatetraenoyl)-sn-glycero-3-phosphate + ADP + H(+)</text>
        <dbReference type="Rhea" id="RHEA:40403"/>
        <dbReference type="ChEBI" id="CHEBI:15378"/>
        <dbReference type="ChEBI" id="CHEBI:30616"/>
        <dbReference type="ChEBI" id="CHEBI:77184"/>
        <dbReference type="ChEBI" id="CHEBI:77186"/>
        <dbReference type="ChEBI" id="CHEBI:456216"/>
    </reaction>
    <physiologicalReaction direction="left-to-right" evidence="1">
        <dbReference type="Rhea" id="RHEA:40404"/>
    </physiologicalReaction>
</comment>
<comment type="catalytic activity">
    <reaction evidence="1">
        <text>1-O-hexadecyl-2-(9Z-octadecenoyl)-sn-glycerol + ATP = 1-O-hexadecyl-2-(9Z-octadecenoyl)-sn-glycero-3-phosphate + ADP + H(+)</text>
        <dbReference type="Rhea" id="RHEA:40407"/>
        <dbReference type="ChEBI" id="CHEBI:15378"/>
        <dbReference type="ChEBI" id="CHEBI:30616"/>
        <dbReference type="ChEBI" id="CHEBI:77185"/>
        <dbReference type="ChEBI" id="CHEBI:77187"/>
        <dbReference type="ChEBI" id="CHEBI:456216"/>
    </reaction>
    <physiologicalReaction direction="left-to-right" evidence="1">
        <dbReference type="Rhea" id="RHEA:40408"/>
    </physiologicalReaction>
</comment>
<comment type="catalytic activity">
    <reaction evidence="2">
        <text>1-O-hexadecyl-sn-glycerol + ATP = 1-O-hexadecyl-sn-glycero-3-phosphate + ADP + H(+)</text>
        <dbReference type="Rhea" id="RHEA:41672"/>
        <dbReference type="ChEBI" id="CHEBI:15378"/>
        <dbReference type="ChEBI" id="CHEBI:30616"/>
        <dbReference type="ChEBI" id="CHEBI:34115"/>
        <dbReference type="ChEBI" id="CHEBI:77580"/>
        <dbReference type="ChEBI" id="CHEBI:456216"/>
    </reaction>
    <physiologicalReaction direction="left-to-right" evidence="2">
        <dbReference type="Rhea" id="RHEA:41673"/>
    </physiologicalReaction>
</comment>
<comment type="activity regulation">
    <text evidence="6">Stimulated by calcium and phosphatidylserine.</text>
</comment>
<comment type="biophysicochemical properties">
    <kinetics>
        <KM evidence="8">0.13 mM for ATP (at pH 7.4)</KM>
        <KM evidence="6">0.1 mM for ATP (at pH 7.4 and 30 degrees Celsius)</KM>
    </kinetics>
</comment>
<comment type="pathway">
    <text evidence="10">Lipid metabolism; glycerolipid metabolism.</text>
</comment>
<comment type="subunit">
    <text evidence="1">Monomer.</text>
</comment>
<comment type="subcellular location">
    <subcellularLocation>
        <location evidence="8">Cytoplasm</location>
        <location evidence="8">Cytosol</location>
    </subcellularLocation>
</comment>
<comment type="similarity">
    <text evidence="9">Belongs to the eukaryotic diacylglycerol kinase family.</text>
</comment>
<dbReference type="EC" id="2.7.1.107" evidence="6 7 8"/>
<dbReference type="EC" id="2.7.1.93" evidence="2"/>
<dbReference type="EMBL" id="X53256">
    <property type="protein sequence ID" value="CAA37347.1"/>
    <property type="molecule type" value="mRNA"/>
</dbReference>
<dbReference type="PIR" id="S09156">
    <property type="entry name" value="S09156"/>
</dbReference>
<dbReference type="RefSeq" id="NP_999197.1">
    <property type="nucleotide sequence ID" value="NM_214032.2"/>
</dbReference>
<dbReference type="RefSeq" id="XP_005663934.1">
    <property type="nucleotide sequence ID" value="XM_005663877.3"/>
</dbReference>
<dbReference type="RefSeq" id="XP_020946786.1">
    <property type="nucleotide sequence ID" value="XM_021091127.1"/>
</dbReference>
<dbReference type="SMR" id="P20192"/>
<dbReference type="FunCoup" id="P20192">
    <property type="interactions" value="518"/>
</dbReference>
<dbReference type="STRING" id="9823.ENSSSCP00000043702"/>
<dbReference type="BindingDB" id="P20192"/>
<dbReference type="ChEMBL" id="CHEMBL4523195"/>
<dbReference type="SwissLipids" id="SLP:000000924"/>
<dbReference type="iPTMnet" id="P20192"/>
<dbReference type="PaxDb" id="9823-ENSSSCP00000000387"/>
<dbReference type="PeptideAtlas" id="P20192"/>
<dbReference type="Ensembl" id="ENSSSCT00015071712.1">
    <property type="protein sequence ID" value="ENSSSCP00015028738.1"/>
    <property type="gene ID" value="ENSSSCG00015053448.1"/>
</dbReference>
<dbReference type="Ensembl" id="ENSSSCT00015071920.1">
    <property type="protein sequence ID" value="ENSSSCP00015028848.1"/>
    <property type="gene ID" value="ENSSSCG00015053448.1"/>
</dbReference>
<dbReference type="Ensembl" id="ENSSSCT00040003422.1">
    <property type="protein sequence ID" value="ENSSSCP00040001033.1"/>
    <property type="gene ID" value="ENSSSCG00040002738.1"/>
</dbReference>
<dbReference type="Ensembl" id="ENSSSCT00040003461.1">
    <property type="protein sequence ID" value="ENSSSCP00040001053.1"/>
    <property type="gene ID" value="ENSSSCG00040002738.1"/>
</dbReference>
<dbReference type="Ensembl" id="ENSSSCT00045059915.1">
    <property type="protein sequence ID" value="ENSSSCP00045042055.1"/>
    <property type="gene ID" value="ENSSSCG00045034839.1"/>
</dbReference>
<dbReference type="Ensembl" id="ENSSSCT00045060222.1">
    <property type="protein sequence ID" value="ENSSSCP00045042289.1"/>
    <property type="gene ID" value="ENSSSCG00045034839.1"/>
</dbReference>
<dbReference type="Ensembl" id="ENSSSCT00055021361.1">
    <property type="protein sequence ID" value="ENSSSCP00055016919.1"/>
    <property type="gene ID" value="ENSSSCG00055010666.1"/>
</dbReference>
<dbReference type="Ensembl" id="ENSSSCT00055021423.1">
    <property type="protein sequence ID" value="ENSSSCP00055016971.1"/>
    <property type="gene ID" value="ENSSSCG00055010666.1"/>
</dbReference>
<dbReference type="Ensembl" id="ENSSSCT00060098048.1">
    <property type="protein sequence ID" value="ENSSSCP00060042504.1"/>
    <property type="gene ID" value="ENSSSCG00060071679.1"/>
</dbReference>
<dbReference type="Ensembl" id="ENSSSCT00060098153.1">
    <property type="protein sequence ID" value="ENSSSCP00060042553.1"/>
    <property type="gene ID" value="ENSSSCG00060071679.1"/>
</dbReference>
<dbReference type="Ensembl" id="ENSSSCT00065064046.1">
    <property type="protein sequence ID" value="ENSSSCP00065027748.1"/>
    <property type="gene ID" value="ENSSSCG00065046800.1"/>
</dbReference>
<dbReference type="Ensembl" id="ENSSSCT00065064056.1">
    <property type="protein sequence ID" value="ENSSSCP00065027755.1"/>
    <property type="gene ID" value="ENSSSCG00065046800.1"/>
</dbReference>
<dbReference type="Ensembl" id="ENSSSCT00085009704">
    <property type="protein sequence ID" value="ENSSSCP00085006994"/>
    <property type="gene ID" value="ENSSSCG00085005157"/>
</dbReference>
<dbReference type="Ensembl" id="ENSSSCT00115030072">
    <property type="protein sequence ID" value="ENSSSCP00115028573"/>
    <property type="gene ID" value="ENSSSCG00115017103"/>
</dbReference>
<dbReference type="GeneID" id="397097"/>
<dbReference type="KEGG" id="ssc:397097"/>
<dbReference type="CTD" id="1606"/>
<dbReference type="eggNOG" id="KOG1169">
    <property type="taxonomic scope" value="Eukaryota"/>
</dbReference>
<dbReference type="HOGENOM" id="CLU_003770_1_1_1"/>
<dbReference type="InParanoid" id="P20192"/>
<dbReference type="OrthoDB" id="242257at2759"/>
<dbReference type="TreeFam" id="TF313104"/>
<dbReference type="BRENDA" id="2.7.1.107">
    <property type="organism ID" value="6170"/>
</dbReference>
<dbReference type="Reactome" id="R-SSC-114508">
    <property type="pathway name" value="Effects of PIP2 hydrolysis"/>
</dbReference>
<dbReference type="SABIO-RK" id="P20192"/>
<dbReference type="UniPathway" id="UPA00230"/>
<dbReference type="Proteomes" id="UP000008227">
    <property type="component" value="Unplaced"/>
</dbReference>
<dbReference type="Proteomes" id="UP000314985">
    <property type="component" value="Unplaced"/>
</dbReference>
<dbReference type="Proteomes" id="UP000694570">
    <property type="component" value="Unplaced"/>
</dbReference>
<dbReference type="Proteomes" id="UP000694571">
    <property type="component" value="Unplaced"/>
</dbReference>
<dbReference type="Proteomes" id="UP000694720">
    <property type="component" value="Unplaced"/>
</dbReference>
<dbReference type="Proteomes" id="UP000694722">
    <property type="component" value="Unplaced"/>
</dbReference>
<dbReference type="Proteomes" id="UP000694723">
    <property type="component" value="Unplaced"/>
</dbReference>
<dbReference type="Proteomes" id="UP000694724">
    <property type="component" value="Unplaced"/>
</dbReference>
<dbReference type="Proteomes" id="UP000694725">
    <property type="component" value="Unplaced"/>
</dbReference>
<dbReference type="Proteomes" id="UP000694726">
    <property type="component" value="Unplaced"/>
</dbReference>
<dbReference type="Proteomes" id="UP000694727">
    <property type="component" value="Unplaced"/>
</dbReference>
<dbReference type="Proteomes" id="UP000694728">
    <property type="component" value="Unplaced"/>
</dbReference>
<dbReference type="GO" id="GO:0005829">
    <property type="term" value="C:cytosol"/>
    <property type="evidence" value="ECO:0000250"/>
    <property type="project" value="UniProtKB"/>
</dbReference>
<dbReference type="GO" id="GO:0005886">
    <property type="term" value="C:plasma membrane"/>
    <property type="evidence" value="ECO:0000318"/>
    <property type="project" value="GO_Central"/>
</dbReference>
<dbReference type="GO" id="GO:0047649">
    <property type="term" value="F:alkylglycerol kinase activity"/>
    <property type="evidence" value="ECO:0007669"/>
    <property type="project" value="RHEA"/>
</dbReference>
<dbReference type="GO" id="GO:0005524">
    <property type="term" value="F:ATP binding"/>
    <property type="evidence" value="ECO:0007669"/>
    <property type="project" value="UniProtKB-KW"/>
</dbReference>
<dbReference type="GO" id="GO:0004143">
    <property type="term" value="F:ATP-dependent diacylglycerol kinase activity"/>
    <property type="evidence" value="ECO:0000314"/>
    <property type="project" value="UniProtKB"/>
</dbReference>
<dbReference type="GO" id="GO:0005509">
    <property type="term" value="F:calcium ion binding"/>
    <property type="evidence" value="ECO:0007669"/>
    <property type="project" value="InterPro"/>
</dbReference>
<dbReference type="GO" id="GO:0008270">
    <property type="term" value="F:zinc ion binding"/>
    <property type="evidence" value="ECO:0007669"/>
    <property type="project" value="UniProtKB-KW"/>
</dbReference>
<dbReference type="GO" id="GO:0046339">
    <property type="term" value="P:diacylglycerol metabolic process"/>
    <property type="evidence" value="ECO:0000314"/>
    <property type="project" value="UniProtKB"/>
</dbReference>
<dbReference type="GO" id="GO:0035556">
    <property type="term" value="P:intracellular signal transduction"/>
    <property type="evidence" value="ECO:0000318"/>
    <property type="project" value="GO_Central"/>
</dbReference>
<dbReference type="GO" id="GO:0046834">
    <property type="term" value="P:lipid phosphorylation"/>
    <property type="evidence" value="ECO:0000314"/>
    <property type="project" value="UniProtKB"/>
</dbReference>
<dbReference type="GO" id="GO:0006654">
    <property type="term" value="P:phosphatidic acid biosynthetic process"/>
    <property type="evidence" value="ECO:0000314"/>
    <property type="project" value="UniProtKB"/>
</dbReference>
<dbReference type="GO" id="GO:0007200">
    <property type="term" value="P:phospholipase C-activating G protein-coupled receptor signaling pathway"/>
    <property type="evidence" value="ECO:0007669"/>
    <property type="project" value="InterPro"/>
</dbReference>
<dbReference type="CDD" id="cd20799">
    <property type="entry name" value="C1_DGK_typeI_rpt1"/>
    <property type="match status" value="1"/>
</dbReference>
<dbReference type="CDD" id="cd20890">
    <property type="entry name" value="C1_DGKalpha_rpt2"/>
    <property type="match status" value="1"/>
</dbReference>
<dbReference type="CDD" id="cd00051">
    <property type="entry name" value="EFh"/>
    <property type="match status" value="1"/>
</dbReference>
<dbReference type="FunFam" id="1.10.238.10:FF:000017">
    <property type="entry name" value="Diacylglycerol kinase"/>
    <property type="match status" value="1"/>
</dbReference>
<dbReference type="FunFam" id="1.10.238.110:FF:000004">
    <property type="entry name" value="Diacylglycerol kinase"/>
    <property type="match status" value="1"/>
</dbReference>
<dbReference type="FunFam" id="2.60.200.40:FF:000003">
    <property type="entry name" value="Diacylglycerol kinase"/>
    <property type="match status" value="1"/>
</dbReference>
<dbReference type="FunFam" id="3.30.60.20:FF:000039">
    <property type="entry name" value="Diacylglycerol kinase"/>
    <property type="match status" value="1"/>
</dbReference>
<dbReference type="FunFam" id="3.30.60.20:FF:000047">
    <property type="entry name" value="Diacylglycerol kinase"/>
    <property type="match status" value="1"/>
</dbReference>
<dbReference type="FunFam" id="3.40.50.10330:FF:000003">
    <property type="entry name" value="Diacylglycerol kinase"/>
    <property type="match status" value="1"/>
</dbReference>
<dbReference type="Gene3D" id="2.60.200.40">
    <property type="match status" value="1"/>
</dbReference>
<dbReference type="Gene3D" id="3.30.60.20">
    <property type="match status" value="2"/>
</dbReference>
<dbReference type="Gene3D" id="1.10.238.110">
    <property type="entry name" value="Diacylglycerol kinase alpha"/>
    <property type="match status" value="1"/>
</dbReference>
<dbReference type="Gene3D" id="1.10.238.10">
    <property type="entry name" value="EF-hand"/>
    <property type="match status" value="1"/>
</dbReference>
<dbReference type="Gene3D" id="3.40.50.10330">
    <property type="entry name" value="Probable inorganic polyphosphate/atp-NAD kinase, domain 1"/>
    <property type="match status" value="1"/>
</dbReference>
<dbReference type="InterPro" id="IPR017438">
    <property type="entry name" value="ATP-NAD_kinase_N"/>
</dbReference>
<dbReference type="InterPro" id="IPR046349">
    <property type="entry name" value="C1-like_sf"/>
</dbReference>
<dbReference type="InterPro" id="IPR047469">
    <property type="entry name" value="C1_DGKalpha_rpt2"/>
</dbReference>
<dbReference type="InterPro" id="IPR029477">
    <property type="entry name" value="DAG_kinase_typeI_N"/>
</dbReference>
<dbReference type="InterPro" id="IPR037607">
    <property type="entry name" value="DGK"/>
</dbReference>
<dbReference type="InterPro" id="IPR038199">
    <property type="entry name" value="DGK_typeI_N_sf"/>
</dbReference>
<dbReference type="InterPro" id="IPR000756">
    <property type="entry name" value="Diacylglycerol_kin_accessory"/>
</dbReference>
<dbReference type="InterPro" id="IPR001206">
    <property type="entry name" value="Diacylglycerol_kinase_cat_dom"/>
</dbReference>
<dbReference type="InterPro" id="IPR011992">
    <property type="entry name" value="EF-hand-dom_pair"/>
</dbReference>
<dbReference type="InterPro" id="IPR018247">
    <property type="entry name" value="EF_Hand_1_Ca_BS"/>
</dbReference>
<dbReference type="InterPro" id="IPR002048">
    <property type="entry name" value="EF_hand_dom"/>
</dbReference>
<dbReference type="InterPro" id="IPR016064">
    <property type="entry name" value="NAD/diacylglycerol_kinase_sf"/>
</dbReference>
<dbReference type="InterPro" id="IPR002219">
    <property type="entry name" value="PE/DAG-bd"/>
</dbReference>
<dbReference type="PANTHER" id="PTHR11255">
    <property type="entry name" value="DIACYLGLYCEROL KINASE"/>
    <property type="match status" value="1"/>
</dbReference>
<dbReference type="PANTHER" id="PTHR11255:SF38">
    <property type="entry name" value="DIACYLGLYCEROL KINASE ALPHA"/>
    <property type="match status" value="1"/>
</dbReference>
<dbReference type="Pfam" id="PF00130">
    <property type="entry name" value="C1_1"/>
    <property type="match status" value="2"/>
</dbReference>
<dbReference type="Pfam" id="PF14513">
    <property type="entry name" value="DAG_kinase_N"/>
    <property type="match status" value="1"/>
</dbReference>
<dbReference type="Pfam" id="PF00609">
    <property type="entry name" value="DAGK_acc"/>
    <property type="match status" value="1"/>
</dbReference>
<dbReference type="Pfam" id="PF00781">
    <property type="entry name" value="DAGK_cat"/>
    <property type="match status" value="1"/>
</dbReference>
<dbReference type="Pfam" id="PF13499">
    <property type="entry name" value="EF-hand_7"/>
    <property type="match status" value="1"/>
</dbReference>
<dbReference type="SMART" id="SM00109">
    <property type="entry name" value="C1"/>
    <property type="match status" value="2"/>
</dbReference>
<dbReference type="SMART" id="SM00045">
    <property type="entry name" value="DAGKa"/>
    <property type="match status" value="1"/>
</dbReference>
<dbReference type="SMART" id="SM00046">
    <property type="entry name" value="DAGKc"/>
    <property type="match status" value="1"/>
</dbReference>
<dbReference type="SMART" id="SM00054">
    <property type="entry name" value="EFh"/>
    <property type="match status" value="2"/>
</dbReference>
<dbReference type="SUPFAM" id="SSF57889">
    <property type="entry name" value="Cysteine-rich domain"/>
    <property type="match status" value="2"/>
</dbReference>
<dbReference type="SUPFAM" id="SSF47473">
    <property type="entry name" value="EF-hand"/>
    <property type="match status" value="2"/>
</dbReference>
<dbReference type="SUPFAM" id="SSF111331">
    <property type="entry name" value="NAD kinase/diacylglycerol kinase-like"/>
    <property type="match status" value="1"/>
</dbReference>
<dbReference type="PROSITE" id="PS50146">
    <property type="entry name" value="DAGK"/>
    <property type="match status" value="1"/>
</dbReference>
<dbReference type="PROSITE" id="PS00018">
    <property type="entry name" value="EF_HAND_1"/>
    <property type="match status" value="2"/>
</dbReference>
<dbReference type="PROSITE" id="PS50222">
    <property type="entry name" value="EF_HAND_2"/>
    <property type="match status" value="2"/>
</dbReference>
<dbReference type="PROSITE" id="PS00479">
    <property type="entry name" value="ZF_DAG_PE_1"/>
    <property type="match status" value="2"/>
</dbReference>
<dbReference type="PROSITE" id="PS50081">
    <property type="entry name" value="ZF_DAG_PE_2"/>
    <property type="match status" value="2"/>
</dbReference>
<gene>
    <name type="primary">DGKA</name>
    <name type="synonym">DAGK</name>
    <name type="synonym">DAGK1</name>
</gene>